<evidence type="ECO:0000256" key="1">
    <source>
        <dbReference type="SAM" id="MobiDB-lite"/>
    </source>
</evidence>
<keyword id="KW-1185">Reference proteome</keyword>
<sequence>METIVLVPRQDQETFSDSRPVLDGDLMLEFLENKIRHPVRRRQPRVVPVTSSDPEVVDDEDDEDQSDDSDEERQRLYFQYMVLKRMYPTEVIPEMTTYSNVAIMREKYKLLTRRLSLDKHINEWKKYIIVGMCIMELVMTKLNFDASGFARYQIKSLGAYDQLLAEMADKYYEATPQSSVEMRLMTTMGMNMAVFMLGKLLGGQMDFLGLLENAFGSSS</sequence>
<accession>Q6GZV4</accession>
<organismHost>
    <name type="scientific">Dryophytes versicolor</name>
    <name type="common">chameleon treefrog</name>
    <dbReference type="NCBI Taxonomy" id="30343"/>
</organismHost>
<organismHost>
    <name type="scientific">Lithobates pipiens</name>
    <name type="common">Northern leopard frog</name>
    <name type="synonym">Rana pipiens</name>
    <dbReference type="NCBI Taxonomy" id="8404"/>
</organismHost>
<organismHost>
    <name type="scientific">Lithobates sylvaticus</name>
    <name type="common">Wood frog</name>
    <name type="synonym">Rana sylvatica</name>
    <dbReference type="NCBI Taxonomy" id="45438"/>
</organismHost>
<organismHost>
    <name type="scientific">Notophthalmus viridescens</name>
    <name type="common">Eastern newt</name>
    <name type="synonym">Triturus viridescens</name>
    <dbReference type="NCBI Taxonomy" id="8316"/>
</organismHost>
<protein>
    <recommendedName>
        <fullName>Uncharacterized protein 021L</fullName>
    </recommendedName>
</protein>
<dbReference type="EMBL" id="AY548484">
    <property type="protein sequence ID" value="AAT09680.1"/>
    <property type="molecule type" value="Genomic_DNA"/>
</dbReference>
<dbReference type="RefSeq" id="YP_031599.1">
    <property type="nucleotide sequence ID" value="NC_005946.1"/>
</dbReference>
<dbReference type="KEGG" id="vg:2947741"/>
<dbReference type="Proteomes" id="UP000008770">
    <property type="component" value="Segment"/>
</dbReference>
<dbReference type="InterPro" id="IPR043910">
    <property type="entry name" value="DUF5767"/>
</dbReference>
<dbReference type="Pfam" id="PF19071">
    <property type="entry name" value="DUF5767"/>
    <property type="match status" value="1"/>
</dbReference>
<reference key="1">
    <citation type="journal article" date="2004" name="Virology">
        <title>Comparative genomic analyses of frog virus 3, type species of the genus Ranavirus (family Iridoviridae).</title>
        <authorList>
            <person name="Tan W.G."/>
            <person name="Barkman T.J."/>
            <person name="Gregory Chinchar V."/>
            <person name="Essani K."/>
        </authorList>
    </citation>
    <scope>NUCLEOTIDE SEQUENCE [LARGE SCALE GENOMIC DNA]</scope>
</reference>
<organism>
    <name type="scientific">Frog virus 3 (isolate Goorha)</name>
    <name type="common">FV-3</name>
    <dbReference type="NCBI Taxonomy" id="654924"/>
    <lineage>
        <taxon>Viruses</taxon>
        <taxon>Varidnaviria</taxon>
        <taxon>Bamfordvirae</taxon>
        <taxon>Nucleocytoviricota</taxon>
        <taxon>Megaviricetes</taxon>
        <taxon>Pimascovirales</taxon>
        <taxon>Iridoviridae</taxon>
        <taxon>Alphairidovirinae</taxon>
        <taxon>Ranavirus</taxon>
        <taxon>Frog virus 3</taxon>
    </lineage>
</organism>
<feature type="chain" id="PRO_0000410539" description="Uncharacterized protein 021L">
    <location>
        <begin position="1"/>
        <end position="219"/>
    </location>
</feature>
<feature type="region of interest" description="Disordered" evidence="1">
    <location>
        <begin position="42"/>
        <end position="71"/>
    </location>
</feature>
<feature type="compositionally biased region" description="Low complexity" evidence="1">
    <location>
        <begin position="45"/>
        <end position="54"/>
    </location>
</feature>
<feature type="compositionally biased region" description="Acidic residues" evidence="1">
    <location>
        <begin position="55"/>
        <end position="71"/>
    </location>
</feature>
<gene>
    <name type="ORF">FV3-021L</name>
</gene>
<proteinExistence type="predicted"/>
<name>021L_FRG3G</name>